<sequence length="810" mass="92819">MANFINMYRQLLSLPLSALVKNNPIPANPIEELSLNIHQPIVYVLPYTSQTDFVIFRRNCLALGLPDPAEKNEINGVKLPRYVYLDEGRRIFKSKGAKDETTTIFNKYLELHRTSESLDVQLIPVSVLWGRSPGQEDKSDLPNLRLLNGIQKTFAAIWFGRDTFVRFSQAVSLRYMVVEHGSDEKIAQKLARVAKMHFAKQRISATGPRLPNRQAMFNKLLQSEAIRRAIEDEAKSKNISIEKAQKEAYKILDEIAADVSHSSLRAVDRFLRWLWNKLYSGIDVQNSNRVRKLALEGHEIVYVPCHRSHIDYLLLSYVLYHQGLVPPHIAAGINLNFWPIGRMFRSWGAFFIRRTFKGNRLYSAIFREYLSELFHRGYSVEYFIEGGRSRTGRLLAPKTGMMSMTLQALQHSQTRPISIVPVYVGYEHVLEVDTYAKELRGAAKEKENAGLVLRVIKKLRNLGQGFVNFGEPITLSNYLSQHFPDWKEQNHEEKPQWFTPAVNNISKQVMININKAAAVNSMNLVGTALLSSRQRALSREQLLEQLSSYQQLLQNVPYSTDVVLPNVTPQAMLEHVLALDRIGVLIEKDNFGEIVRLERSSAVLMTYYRNNIQHLFVLPSLVASIILHYEAIQKDLLLDAIRKIYPFLQGELFLHFNEDELNVQIHQIINEFARQSVINSNDNFLSINKSKVRILQLWSAGTREILQRYYITVTILQKQPAISRAELEKESQLVAQRLSVLHGINAPEFFDKAVFSSFIANLKEQRYFDESSYTVLDKIEELASTLSHLISTEICLTVKGTIEKSEDLSS</sequence>
<keyword id="KW-0012">Acyltransferase</keyword>
<keyword id="KW-0997">Cell inner membrane</keyword>
<keyword id="KW-1003">Cell membrane</keyword>
<keyword id="KW-0444">Lipid biosynthesis</keyword>
<keyword id="KW-0443">Lipid metabolism</keyword>
<keyword id="KW-0472">Membrane</keyword>
<keyword id="KW-0594">Phospholipid biosynthesis</keyword>
<keyword id="KW-1208">Phospholipid metabolism</keyword>
<keyword id="KW-0808">Transferase</keyword>
<dbReference type="EC" id="2.3.1.15" evidence="1"/>
<dbReference type="EMBL" id="CP000671">
    <property type="protein sequence ID" value="ABQ98978.1"/>
    <property type="molecule type" value="Genomic_DNA"/>
</dbReference>
<dbReference type="SMR" id="A5UDX7"/>
<dbReference type="KEGG" id="hip:CGSHiEE_08365"/>
<dbReference type="HOGENOM" id="CLU_015407_0_0_6"/>
<dbReference type="UniPathway" id="UPA00557">
    <property type="reaction ID" value="UER00612"/>
</dbReference>
<dbReference type="GO" id="GO:0005886">
    <property type="term" value="C:plasma membrane"/>
    <property type="evidence" value="ECO:0007669"/>
    <property type="project" value="UniProtKB-SubCell"/>
</dbReference>
<dbReference type="GO" id="GO:0004366">
    <property type="term" value="F:glycerol-3-phosphate O-acyltransferase activity"/>
    <property type="evidence" value="ECO:0007669"/>
    <property type="project" value="UniProtKB-UniRule"/>
</dbReference>
<dbReference type="GO" id="GO:0016024">
    <property type="term" value="P:CDP-diacylglycerol biosynthetic process"/>
    <property type="evidence" value="ECO:0007669"/>
    <property type="project" value="UniProtKB-UniRule"/>
</dbReference>
<dbReference type="GO" id="GO:0006631">
    <property type="term" value="P:fatty acid metabolic process"/>
    <property type="evidence" value="ECO:0007669"/>
    <property type="project" value="TreeGrafter"/>
</dbReference>
<dbReference type="CDD" id="cd07993">
    <property type="entry name" value="LPLAT_DHAPAT-like"/>
    <property type="match status" value="1"/>
</dbReference>
<dbReference type="HAMAP" id="MF_00393">
    <property type="entry name" value="Glyc3P_acyltrans"/>
    <property type="match status" value="1"/>
</dbReference>
<dbReference type="InterPro" id="IPR022284">
    <property type="entry name" value="GPAT/DHAPAT"/>
</dbReference>
<dbReference type="InterPro" id="IPR045520">
    <property type="entry name" value="GPAT/DHAPAT_C"/>
</dbReference>
<dbReference type="InterPro" id="IPR041728">
    <property type="entry name" value="GPAT/DHAPAT_LPLAT"/>
</dbReference>
<dbReference type="InterPro" id="IPR028354">
    <property type="entry name" value="GPAT_PlsB"/>
</dbReference>
<dbReference type="InterPro" id="IPR002123">
    <property type="entry name" value="Plipid/glycerol_acylTrfase"/>
</dbReference>
<dbReference type="NCBIfam" id="TIGR03703">
    <property type="entry name" value="plsB"/>
    <property type="match status" value="1"/>
</dbReference>
<dbReference type="NCBIfam" id="NF003441">
    <property type="entry name" value="PRK04974.1"/>
    <property type="match status" value="1"/>
</dbReference>
<dbReference type="PANTHER" id="PTHR12563:SF17">
    <property type="entry name" value="DIHYDROXYACETONE PHOSPHATE ACYLTRANSFERASE"/>
    <property type="match status" value="1"/>
</dbReference>
<dbReference type="PANTHER" id="PTHR12563">
    <property type="entry name" value="GLYCEROL-3-PHOSPHATE ACYLTRANSFERASE"/>
    <property type="match status" value="1"/>
</dbReference>
<dbReference type="Pfam" id="PF01553">
    <property type="entry name" value="Acyltransferase"/>
    <property type="match status" value="1"/>
</dbReference>
<dbReference type="Pfam" id="PF19277">
    <property type="entry name" value="GPAT_C"/>
    <property type="match status" value="1"/>
</dbReference>
<dbReference type="PIRSF" id="PIRSF500064">
    <property type="entry name" value="GPAT"/>
    <property type="match status" value="1"/>
</dbReference>
<dbReference type="PIRSF" id="PIRSF000437">
    <property type="entry name" value="GPAT_DHAPAT"/>
    <property type="match status" value="1"/>
</dbReference>
<dbReference type="SMART" id="SM00563">
    <property type="entry name" value="PlsC"/>
    <property type="match status" value="1"/>
</dbReference>
<dbReference type="SUPFAM" id="SSF69593">
    <property type="entry name" value="Glycerol-3-phosphate (1)-acyltransferase"/>
    <property type="match status" value="1"/>
</dbReference>
<evidence type="ECO:0000255" key="1">
    <source>
        <dbReference type="HAMAP-Rule" id="MF_00393"/>
    </source>
</evidence>
<proteinExistence type="inferred from homology"/>
<feature type="chain" id="PRO_1000049434" description="Glycerol-3-phosphate acyltransferase">
    <location>
        <begin position="1"/>
        <end position="810"/>
    </location>
</feature>
<feature type="short sequence motif" description="HXXXXD motif">
    <location>
        <begin position="305"/>
        <end position="310"/>
    </location>
</feature>
<comment type="catalytic activity">
    <reaction evidence="1">
        <text>sn-glycerol 3-phosphate + an acyl-CoA = a 1-acyl-sn-glycero-3-phosphate + CoA</text>
        <dbReference type="Rhea" id="RHEA:15325"/>
        <dbReference type="ChEBI" id="CHEBI:57287"/>
        <dbReference type="ChEBI" id="CHEBI:57597"/>
        <dbReference type="ChEBI" id="CHEBI:57970"/>
        <dbReference type="ChEBI" id="CHEBI:58342"/>
        <dbReference type="EC" id="2.3.1.15"/>
    </reaction>
</comment>
<comment type="pathway">
    <text evidence="1">Phospholipid metabolism; CDP-diacylglycerol biosynthesis; CDP-diacylglycerol from sn-glycerol 3-phosphate: step 1/3.</text>
</comment>
<comment type="subcellular location">
    <subcellularLocation>
        <location evidence="1">Cell inner membrane</location>
        <topology evidence="1">Peripheral membrane protein</topology>
        <orientation evidence="1">Cytoplasmic side</orientation>
    </subcellularLocation>
</comment>
<comment type="domain">
    <text evidence="1">The HXXXXD motif is essential for acyltransferase activity and may constitute the binding site for the phosphate moiety of the glycerol-3-phosphate.</text>
</comment>
<comment type="similarity">
    <text evidence="1">Belongs to the GPAT/DAPAT family.</text>
</comment>
<organism>
    <name type="scientific">Haemophilus influenzae (strain PittEE)</name>
    <dbReference type="NCBI Taxonomy" id="374930"/>
    <lineage>
        <taxon>Bacteria</taxon>
        <taxon>Pseudomonadati</taxon>
        <taxon>Pseudomonadota</taxon>
        <taxon>Gammaproteobacteria</taxon>
        <taxon>Pasteurellales</taxon>
        <taxon>Pasteurellaceae</taxon>
        <taxon>Haemophilus</taxon>
    </lineage>
</organism>
<name>PLSB_HAEIE</name>
<reference key="1">
    <citation type="journal article" date="2007" name="Genome Biol.">
        <title>Characterization and modeling of the Haemophilus influenzae core and supragenomes based on the complete genomic sequences of Rd and 12 clinical nontypeable strains.</title>
        <authorList>
            <person name="Hogg J.S."/>
            <person name="Hu F.Z."/>
            <person name="Janto B."/>
            <person name="Boissy R."/>
            <person name="Hayes J."/>
            <person name="Keefe R."/>
            <person name="Post J.C."/>
            <person name="Ehrlich G.D."/>
        </authorList>
    </citation>
    <scope>NUCLEOTIDE SEQUENCE [LARGE SCALE GENOMIC DNA]</scope>
    <source>
        <strain>PittEE</strain>
    </source>
</reference>
<gene>
    <name evidence="1" type="primary">plsB</name>
    <name type="ordered locus">CGSHiEE_08365</name>
</gene>
<protein>
    <recommendedName>
        <fullName evidence="1">Glycerol-3-phosphate acyltransferase</fullName>
        <shortName evidence="1">GPAT</shortName>
        <ecNumber evidence="1">2.3.1.15</ecNumber>
    </recommendedName>
</protein>
<accession>A5UDX7</accession>